<feature type="chain" id="PRO_0000238197" description="ATP synthase subunit alpha">
    <location>
        <begin position="1"/>
        <end position="502"/>
    </location>
</feature>
<feature type="region of interest" description="Disordered" evidence="2">
    <location>
        <begin position="117"/>
        <end position="139"/>
    </location>
</feature>
<feature type="binding site" evidence="1">
    <location>
        <begin position="169"/>
        <end position="176"/>
    </location>
    <ligand>
        <name>ATP</name>
        <dbReference type="ChEBI" id="CHEBI:30616"/>
    </ligand>
</feature>
<feature type="site" description="Required for activity" evidence="1">
    <location>
        <position position="362"/>
    </location>
</feature>
<proteinExistence type="inferred from homology"/>
<sequence>MSIKAEEISTLIKQQIENYQSEIEVHDVGTVIQVGDGIARVHGLDNCMAGELVEFSNGVLGLAQNLEESNVGIVILGPYKDIREGDEVKRTGRIMEVPVGEELLGRVVNPLGQPVDGMGPVLTSKTRPIESPAPGVMDRKSVHEPLQTGIKSIDALIPIGRGQRELIIGDRQTGKTSIAIDTILNQKDQDMICIYVAIGQKESTVRGVVETLRKHGALDYTIVVTASASQPAPLLYLAPYAGVAMGEEFMYNGKHVLVVYDDLSKQATAYRELSLLLRRPPGREAFPGDVFYLHSRLLERAAKLSDAKGGGSLTALPFVETQAGDISAYIPTNVISITDGQIFLQSDLFFSGVRPAVNPGLSVSRVGGSAQIKAMKKVAGTLRLDLASYRELEAFAQFGSDLDKATQAKLNRGARTVEVLKQDLHKPLRVEKQVAILYALTRGFLDDVPVEDIKRFEEELFMYLDQNHKDLLDSIAQTGNLPADEDMKGAIEGFKRTFAPSN</sequence>
<organism>
    <name type="scientific">Bacillus licheniformis (strain ATCC 14580 / DSM 13 / JCM 2505 / CCUG 7422 / NBRC 12200 / NCIMB 9375 / NCTC 10341 / NRRL NRS-1264 / Gibson 46)</name>
    <dbReference type="NCBI Taxonomy" id="279010"/>
    <lineage>
        <taxon>Bacteria</taxon>
        <taxon>Bacillati</taxon>
        <taxon>Bacillota</taxon>
        <taxon>Bacilli</taxon>
        <taxon>Bacillales</taxon>
        <taxon>Bacillaceae</taxon>
        <taxon>Bacillus</taxon>
    </lineage>
</organism>
<protein>
    <recommendedName>
        <fullName evidence="1">ATP synthase subunit alpha</fullName>
        <ecNumber evidence="1">7.1.2.2</ecNumber>
    </recommendedName>
    <alternativeName>
        <fullName evidence="1">ATP synthase F1 sector subunit alpha</fullName>
    </alternativeName>
    <alternativeName>
        <fullName evidence="1">F-ATPase subunit alpha</fullName>
    </alternativeName>
</protein>
<comment type="function">
    <text evidence="1">Produces ATP from ADP in the presence of a proton gradient across the membrane. The alpha chain is a regulatory subunit.</text>
</comment>
<comment type="catalytic activity">
    <reaction evidence="1">
        <text>ATP + H2O + 4 H(+)(in) = ADP + phosphate + 5 H(+)(out)</text>
        <dbReference type="Rhea" id="RHEA:57720"/>
        <dbReference type="ChEBI" id="CHEBI:15377"/>
        <dbReference type="ChEBI" id="CHEBI:15378"/>
        <dbReference type="ChEBI" id="CHEBI:30616"/>
        <dbReference type="ChEBI" id="CHEBI:43474"/>
        <dbReference type="ChEBI" id="CHEBI:456216"/>
        <dbReference type="EC" id="7.1.2.2"/>
    </reaction>
</comment>
<comment type="subunit">
    <text evidence="1">F-type ATPases have 2 components, CF(1) - the catalytic core - and CF(0) - the membrane proton channel. CF(1) has five subunits: alpha(3), beta(3), gamma(1), delta(1), epsilon(1). CF(0) has three main subunits: a(1), b(2) and c(9-12). The alpha and beta chains form an alternating ring which encloses part of the gamma chain. CF(1) is attached to CF(0) by a central stalk formed by the gamma and epsilon chains, while a peripheral stalk is formed by the delta and b chains.</text>
</comment>
<comment type="subcellular location">
    <subcellularLocation>
        <location evidence="1">Cell membrane</location>
        <topology evidence="1">Peripheral membrane protein</topology>
    </subcellularLocation>
</comment>
<comment type="similarity">
    <text evidence="1">Belongs to the ATPase alpha/beta chains family.</text>
</comment>
<reference key="1">
    <citation type="journal article" date="2004" name="J. Mol. Microbiol. Biotechnol.">
        <title>The complete genome sequence of Bacillus licheniformis DSM13, an organism with great industrial potential.</title>
        <authorList>
            <person name="Veith B."/>
            <person name="Herzberg C."/>
            <person name="Steckel S."/>
            <person name="Feesche J."/>
            <person name="Maurer K.H."/>
            <person name="Ehrenreich P."/>
            <person name="Baeumer S."/>
            <person name="Henne A."/>
            <person name="Liesegang H."/>
            <person name="Merkl R."/>
            <person name="Ehrenreich A."/>
            <person name="Gottschalk G."/>
        </authorList>
    </citation>
    <scope>NUCLEOTIDE SEQUENCE [LARGE SCALE GENOMIC DNA]</scope>
    <source>
        <strain>ATCC 14580 / DSM 13 / JCM 2505 / CCUG 7422 / NBRC 12200 / NCIMB 9375 / NCTC 10341 / NRRL NRS-1264 / Gibson 46</strain>
    </source>
</reference>
<reference key="2">
    <citation type="journal article" date="2004" name="Genome Biol.">
        <title>Complete genome sequence of the industrial bacterium Bacillus licheniformis and comparisons with closely related Bacillus species.</title>
        <authorList>
            <person name="Rey M.W."/>
            <person name="Ramaiya P."/>
            <person name="Nelson B.A."/>
            <person name="Brody-Karpin S.D."/>
            <person name="Zaretsky E.J."/>
            <person name="Tang M."/>
            <person name="Lopez de Leon A."/>
            <person name="Xiang H."/>
            <person name="Gusti V."/>
            <person name="Clausen I.G."/>
            <person name="Olsen P.B."/>
            <person name="Rasmussen M.D."/>
            <person name="Andersen J.T."/>
            <person name="Joergensen P.L."/>
            <person name="Larsen T.S."/>
            <person name="Sorokin A."/>
            <person name="Bolotin A."/>
            <person name="Lapidus A."/>
            <person name="Galleron N."/>
            <person name="Ehrlich S.D."/>
            <person name="Berka R.M."/>
        </authorList>
    </citation>
    <scope>NUCLEOTIDE SEQUENCE [LARGE SCALE GENOMIC DNA]</scope>
    <source>
        <strain>ATCC 14580 / DSM 13 / JCM 2505 / CCUG 7422 / NBRC 12200 / NCIMB 9375 / NCTC 10341 / NRRL NRS-1264 / Gibson 46</strain>
    </source>
</reference>
<evidence type="ECO:0000255" key="1">
    <source>
        <dbReference type="HAMAP-Rule" id="MF_01346"/>
    </source>
</evidence>
<evidence type="ECO:0000256" key="2">
    <source>
        <dbReference type="SAM" id="MobiDB-lite"/>
    </source>
</evidence>
<accession>Q65DX2</accession>
<accession>Q62PE3</accession>
<gene>
    <name evidence="1" type="primary">atpA</name>
    <name type="ordered locus">BLi03928</name>
    <name type="ordered locus">BL03998</name>
</gene>
<name>ATPA_BACLD</name>
<dbReference type="EC" id="7.1.2.2" evidence="1"/>
<dbReference type="EMBL" id="AE017333">
    <property type="protein sequence ID" value="AAU42742.1"/>
    <property type="molecule type" value="Genomic_DNA"/>
</dbReference>
<dbReference type="EMBL" id="CP000002">
    <property type="protein sequence ID" value="AAU25368.1"/>
    <property type="molecule type" value="Genomic_DNA"/>
</dbReference>
<dbReference type="RefSeq" id="WP_003186010.1">
    <property type="nucleotide sequence ID" value="NC_006322.1"/>
</dbReference>
<dbReference type="SMR" id="Q65DX2"/>
<dbReference type="STRING" id="279010.BL03998"/>
<dbReference type="GeneID" id="92859499"/>
<dbReference type="KEGG" id="bld:BLi03928"/>
<dbReference type="KEGG" id="bli:BL03998"/>
<dbReference type="PATRIC" id="fig|279010.13.peg.3997"/>
<dbReference type="eggNOG" id="COG0056">
    <property type="taxonomic scope" value="Bacteria"/>
</dbReference>
<dbReference type="HOGENOM" id="CLU_010091_2_1_9"/>
<dbReference type="Proteomes" id="UP000000606">
    <property type="component" value="Chromosome"/>
</dbReference>
<dbReference type="GO" id="GO:0005886">
    <property type="term" value="C:plasma membrane"/>
    <property type="evidence" value="ECO:0007669"/>
    <property type="project" value="UniProtKB-SubCell"/>
</dbReference>
<dbReference type="GO" id="GO:0045259">
    <property type="term" value="C:proton-transporting ATP synthase complex"/>
    <property type="evidence" value="ECO:0007669"/>
    <property type="project" value="UniProtKB-KW"/>
</dbReference>
<dbReference type="GO" id="GO:0043531">
    <property type="term" value="F:ADP binding"/>
    <property type="evidence" value="ECO:0007669"/>
    <property type="project" value="TreeGrafter"/>
</dbReference>
<dbReference type="GO" id="GO:0005524">
    <property type="term" value="F:ATP binding"/>
    <property type="evidence" value="ECO:0007669"/>
    <property type="project" value="UniProtKB-UniRule"/>
</dbReference>
<dbReference type="GO" id="GO:0046933">
    <property type="term" value="F:proton-transporting ATP synthase activity, rotational mechanism"/>
    <property type="evidence" value="ECO:0007669"/>
    <property type="project" value="UniProtKB-UniRule"/>
</dbReference>
<dbReference type="CDD" id="cd18113">
    <property type="entry name" value="ATP-synt_F1_alpha_C"/>
    <property type="match status" value="1"/>
</dbReference>
<dbReference type="CDD" id="cd18116">
    <property type="entry name" value="ATP-synt_F1_alpha_N"/>
    <property type="match status" value="1"/>
</dbReference>
<dbReference type="CDD" id="cd01132">
    <property type="entry name" value="F1-ATPase_alpha_CD"/>
    <property type="match status" value="1"/>
</dbReference>
<dbReference type="FunFam" id="1.20.150.20:FF:000001">
    <property type="entry name" value="ATP synthase subunit alpha"/>
    <property type="match status" value="1"/>
</dbReference>
<dbReference type="FunFam" id="2.40.30.20:FF:000001">
    <property type="entry name" value="ATP synthase subunit alpha"/>
    <property type="match status" value="1"/>
</dbReference>
<dbReference type="FunFam" id="3.40.50.300:FF:000002">
    <property type="entry name" value="ATP synthase subunit alpha"/>
    <property type="match status" value="1"/>
</dbReference>
<dbReference type="Gene3D" id="2.40.30.20">
    <property type="match status" value="1"/>
</dbReference>
<dbReference type="Gene3D" id="1.20.150.20">
    <property type="entry name" value="ATP synthase alpha/beta chain, C-terminal domain"/>
    <property type="match status" value="1"/>
</dbReference>
<dbReference type="Gene3D" id="3.40.50.300">
    <property type="entry name" value="P-loop containing nucleotide triphosphate hydrolases"/>
    <property type="match status" value="1"/>
</dbReference>
<dbReference type="HAMAP" id="MF_01346">
    <property type="entry name" value="ATP_synth_alpha_bact"/>
    <property type="match status" value="1"/>
</dbReference>
<dbReference type="InterPro" id="IPR023366">
    <property type="entry name" value="ATP_synth_asu-like_sf"/>
</dbReference>
<dbReference type="InterPro" id="IPR000793">
    <property type="entry name" value="ATP_synth_asu_C"/>
</dbReference>
<dbReference type="InterPro" id="IPR038376">
    <property type="entry name" value="ATP_synth_asu_C_sf"/>
</dbReference>
<dbReference type="InterPro" id="IPR033732">
    <property type="entry name" value="ATP_synth_F1_a_nt-bd_dom"/>
</dbReference>
<dbReference type="InterPro" id="IPR005294">
    <property type="entry name" value="ATP_synth_F1_asu"/>
</dbReference>
<dbReference type="InterPro" id="IPR020003">
    <property type="entry name" value="ATPase_a/bsu_AS"/>
</dbReference>
<dbReference type="InterPro" id="IPR004100">
    <property type="entry name" value="ATPase_F1/V1/A1_a/bsu_N"/>
</dbReference>
<dbReference type="InterPro" id="IPR036121">
    <property type="entry name" value="ATPase_F1/V1/A1_a/bsu_N_sf"/>
</dbReference>
<dbReference type="InterPro" id="IPR000194">
    <property type="entry name" value="ATPase_F1/V1/A1_a/bsu_nucl-bd"/>
</dbReference>
<dbReference type="InterPro" id="IPR027417">
    <property type="entry name" value="P-loop_NTPase"/>
</dbReference>
<dbReference type="NCBIfam" id="TIGR00962">
    <property type="entry name" value="atpA"/>
    <property type="match status" value="1"/>
</dbReference>
<dbReference type="NCBIfam" id="NF009884">
    <property type="entry name" value="PRK13343.1"/>
    <property type="match status" value="1"/>
</dbReference>
<dbReference type="PANTHER" id="PTHR48082">
    <property type="entry name" value="ATP SYNTHASE SUBUNIT ALPHA, MITOCHONDRIAL"/>
    <property type="match status" value="1"/>
</dbReference>
<dbReference type="PANTHER" id="PTHR48082:SF2">
    <property type="entry name" value="ATP SYNTHASE SUBUNIT ALPHA, MITOCHONDRIAL"/>
    <property type="match status" value="1"/>
</dbReference>
<dbReference type="Pfam" id="PF00006">
    <property type="entry name" value="ATP-synt_ab"/>
    <property type="match status" value="1"/>
</dbReference>
<dbReference type="Pfam" id="PF00306">
    <property type="entry name" value="ATP-synt_ab_C"/>
    <property type="match status" value="1"/>
</dbReference>
<dbReference type="Pfam" id="PF02874">
    <property type="entry name" value="ATP-synt_ab_N"/>
    <property type="match status" value="1"/>
</dbReference>
<dbReference type="PIRSF" id="PIRSF039088">
    <property type="entry name" value="F_ATPase_subunit_alpha"/>
    <property type="match status" value="1"/>
</dbReference>
<dbReference type="SUPFAM" id="SSF47917">
    <property type="entry name" value="C-terminal domain of alpha and beta subunits of F1 ATP synthase"/>
    <property type="match status" value="1"/>
</dbReference>
<dbReference type="SUPFAM" id="SSF50615">
    <property type="entry name" value="N-terminal domain of alpha and beta subunits of F1 ATP synthase"/>
    <property type="match status" value="1"/>
</dbReference>
<dbReference type="SUPFAM" id="SSF52540">
    <property type="entry name" value="P-loop containing nucleoside triphosphate hydrolases"/>
    <property type="match status" value="1"/>
</dbReference>
<dbReference type="PROSITE" id="PS00152">
    <property type="entry name" value="ATPASE_ALPHA_BETA"/>
    <property type="match status" value="1"/>
</dbReference>
<keyword id="KW-0066">ATP synthesis</keyword>
<keyword id="KW-0067">ATP-binding</keyword>
<keyword id="KW-1003">Cell membrane</keyword>
<keyword id="KW-0139">CF(1)</keyword>
<keyword id="KW-0375">Hydrogen ion transport</keyword>
<keyword id="KW-0406">Ion transport</keyword>
<keyword id="KW-0472">Membrane</keyword>
<keyword id="KW-0547">Nucleotide-binding</keyword>
<keyword id="KW-1185">Reference proteome</keyword>
<keyword id="KW-1278">Translocase</keyword>
<keyword id="KW-0813">Transport</keyword>